<keyword id="KW-0878">Amphibian defense peptide</keyword>
<keyword id="KW-0929">Antimicrobial</keyword>
<keyword id="KW-0165">Cleavage on pair of basic residues</keyword>
<keyword id="KW-0903">Direct protein sequencing</keyword>
<keyword id="KW-1015">Disulfide bond</keyword>
<keyword id="KW-0964">Secreted</keyword>
<keyword id="KW-0732">Signal</keyword>
<protein>
    <recommendedName>
        <fullName evidence="5">Pelophylaxin-2</fullName>
    </recommendedName>
</protein>
<evidence type="ECO:0000250" key="1">
    <source>
        <dbReference type="UniProtKB" id="A0AEI6"/>
    </source>
</evidence>
<evidence type="ECO:0000250" key="2">
    <source>
        <dbReference type="UniProtKB" id="Q8QFQ4"/>
    </source>
</evidence>
<evidence type="ECO:0000255" key="3"/>
<evidence type="ECO:0000269" key="4">
    <source>
    </source>
</evidence>
<evidence type="ECO:0000303" key="5">
    <source>
    </source>
</evidence>
<evidence type="ECO:0000305" key="6">
    <source>
    </source>
</evidence>
<evidence type="ECO:0000312" key="7">
    <source>
        <dbReference type="EMBL" id="CAI99626.1"/>
    </source>
</evidence>
<comment type="function">
    <text evidence="2">Antimicrobial peptide.</text>
</comment>
<comment type="subcellular location">
    <subcellularLocation>
        <location evidence="3 4">Secreted</location>
    </subcellularLocation>
</comment>
<comment type="tissue specificity">
    <text evidence="6">Expressed by the skin glands.</text>
</comment>
<comment type="mass spectrometry"/>
<comment type="similarity">
    <text evidence="3">Belongs to the frog skin active peptide (FSAP) family. Brevinin subfamily.</text>
</comment>
<proteinExistence type="evidence at protein level"/>
<dbReference type="EMBL" id="AJ972868">
    <property type="protein sequence ID" value="CAI99626.1"/>
    <property type="molecule type" value="mRNA"/>
</dbReference>
<dbReference type="SMR" id="Q2WCN7"/>
<dbReference type="GO" id="GO:0005576">
    <property type="term" value="C:extracellular region"/>
    <property type="evidence" value="ECO:0007669"/>
    <property type="project" value="UniProtKB-SubCell"/>
</dbReference>
<dbReference type="GO" id="GO:0006952">
    <property type="term" value="P:defense response"/>
    <property type="evidence" value="ECO:0007669"/>
    <property type="project" value="UniProtKB-KW"/>
</dbReference>
<dbReference type="InterPro" id="IPR012521">
    <property type="entry name" value="Antimicrobial_frog_2"/>
</dbReference>
<dbReference type="InterPro" id="IPR004275">
    <property type="entry name" value="Frog_antimicrobial_propeptide"/>
</dbReference>
<dbReference type="Pfam" id="PF08023">
    <property type="entry name" value="Antimicrobial_2"/>
    <property type="match status" value="1"/>
</dbReference>
<dbReference type="Pfam" id="PF03032">
    <property type="entry name" value="FSAP_sig_propep"/>
    <property type="match status" value="1"/>
</dbReference>
<organism evidence="7">
    <name type="scientific">Pelophylax fukienensis</name>
    <name type="common">Fukien gold-striped pond frog</name>
    <name type="synonym">Rana fukienensis</name>
    <dbReference type="NCBI Taxonomy" id="88448"/>
    <lineage>
        <taxon>Eukaryota</taxon>
        <taxon>Metazoa</taxon>
        <taxon>Chordata</taxon>
        <taxon>Craniata</taxon>
        <taxon>Vertebrata</taxon>
        <taxon>Euteleostomi</taxon>
        <taxon>Amphibia</taxon>
        <taxon>Batrachia</taxon>
        <taxon>Anura</taxon>
        <taxon>Neobatrachia</taxon>
        <taxon>Ranoidea</taxon>
        <taxon>Ranidae</taxon>
        <taxon>Pelophylax</taxon>
    </lineage>
</organism>
<sequence>MFTMKKSLLFFFFLGTIALSLCEEERGADEEENGAEITDEEVKRGILLNTLKGAAKNVAGVLLDKLKCKITGGC</sequence>
<reference evidence="7" key="1">
    <citation type="journal article" date="2006" name="Peptides">
        <title>Pelophylaxins: novel antimicrobial peptide homologs from the skin secretion of the Fukien gold-striped pond frog, Pelophylax plancyi fukienensis: identification by 'shotgun' cDNA cloning and sequence analysis.</title>
        <authorList>
            <person name="Zhou M."/>
            <person name="Chen T."/>
            <person name="Walker B."/>
            <person name="Shaw C."/>
        </authorList>
    </citation>
    <scope>NUCLEOTIDE SEQUENCE [MRNA]</scope>
    <scope>PROTEIN SEQUENCE OF 45-74</scope>
    <scope>SUBCELLULAR LOCATION</scope>
    <scope>MASS SPECTROMETRY</scope>
    <scope>IDENTIFICATION BY MASS SPECTROMETRY</scope>
    <source>
        <tissue evidence="5">Skin secretion</tissue>
    </source>
</reference>
<feature type="signal peptide" evidence="3">
    <location>
        <begin position="1"/>
        <end position="22"/>
    </location>
</feature>
<feature type="propeptide" id="PRO_0000439444" evidence="6">
    <location>
        <begin position="23"/>
        <end position="42"/>
    </location>
</feature>
<feature type="peptide" id="PRO_0000439445" description="Pelophylaxin-2" evidence="4">
    <location>
        <begin position="45"/>
        <end position="74"/>
    </location>
</feature>
<feature type="disulfide bond" evidence="1">
    <location>
        <begin position="68"/>
        <end position="74"/>
    </location>
</feature>
<accession>Q2WCN7</accession>
<name>PELO2_PELFU</name>